<protein>
    <recommendedName>
        <fullName evidence="1">3-methyl-2-oxobutanoate hydroxymethyltransferase</fullName>
        <ecNumber evidence="1">2.1.2.11</ecNumber>
    </recommendedName>
    <alternativeName>
        <fullName evidence="1">Ketopantoate hydroxymethyltransferase</fullName>
        <shortName evidence="1">KPHMT</shortName>
    </alternativeName>
</protein>
<gene>
    <name evidence="1" type="primary">panB</name>
    <name type="ordered locus">Mvan_3602</name>
</gene>
<organism>
    <name type="scientific">Mycolicibacterium vanbaalenii (strain DSM 7251 / JCM 13017 / BCRC 16820 / KCTC 9966 / NRRL B-24157 / PYR-1)</name>
    <name type="common">Mycobacterium vanbaalenii</name>
    <dbReference type="NCBI Taxonomy" id="350058"/>
    <lineage>
        <taxon>Bacteria</taxon>
        <taxon>Bacillati</taxon>
        <taxon>Actinomycetota</taxon>
        <taxon>Actinomycetes</taxon>
        <taxon>Mycobacteriales</taxon>
        <taxon>Mycobacteriaceae</taxon>
        <taxon>Mycolicibacterium</taxon>
    </lineage>
</organism>
<proteinExistence type="inferred from homology"/>
<dbReference type="EC" id="2.1.2.11" evidence="1"/>
<dbReference type="EMBL" id="AF223945">
    <property type="protein sequence ID" value="AAF34708.1"/>
    <property type="molecule type" value="Genomic_DNA"/>
</dbReference>
<dbReference type="EMBL" id="CP000511">
    <property type="protein sequence ID" value="ABM14394.1"/>
    <property type="molecule type" value="Genomic_DNA"/>
</dbReference>
<dbReference type="PIR" id="T50554">
    <property type="entry name" value="T50554"/>
</dbReference>
<dbReference type="RefSeq" id="WP_011780795.1">
    <property type="nucleotide sequence ID" value="NZ_JACKSD010000034.1"/>
</dbReference>
<dbReference type="SMR" id="Q9L7B2"/>
<dbReference type="STRING" id="350058.Mvan_3602"/>
<dbReference type="KEGG" id="mva:Mvan_3602"/>
<dbReference type="eggNOG" id="COG0413">
    <property type="taxonomic scope" value="Bacteria"/>
</dbReference>
<dbReference type="HOGENOM" id="CLU_036645_1_0_11"/>
<dbReference type="UniPathway" id="UPA00028">
    <property type="reaction ID" value="UER00003"/>
</dbReference>
<dbReference type="Proteomes" id="UP000009159">
    <property type="component" value="Chromosome"/>
</dbReference>
<dbReference type="GO" id="GO:0005737">
    <property type="term" value="C:cytoplasm"/>
    <property type="evidence" value="ECO:0007669"/>
    <property type="project" value="UniProtKB-SubCell"/>
</dbReference>
<dbReference type="GO" id="GO:0003864">
    <property type="term" value="F:3-methyl-2-oxobutanoate hydroxymethyltransferase activity"/>
    <property type="evidence" value="ECO:0007669"/>
    <property type="project" value="UniProtKB-UniRule"/>
</dbReference>
<dbReference type="GO" id="GO:0000287">
    <property type="term" value="F:magnesium ion binding"/>
    <property type="evidence" value="ECO:0007669"/>
    <property type="project" value="TreeGrafter"/>
</dbReference>
<dbReference type="GO" id="GO:0015940">
    <property type="term" value="P:pantothenate biosynthetic process"/>
    <property type="evidence" value="ECO:0007669"/>
    <property type="project" value="UniProtKB-UniRule"/>
</dbReference>
<dbReference type="CDD" id="cd06557">
    <property type="entry name" value="KPHMT-like"/>
    <property type="match status" value="1"/>
</dbReference>
<dbReference type="FunFam" id="3.20.20.60:FF:000003">
    <property type="entry name" value="3-methyl-2-oxobutanoate hydroxymethyltransferase"/>
    <property type="match status" value="1"/>
</dbReference>
<dbReference type="Gene3D" id="3.20.20.60">
    <property type="entry name" value="Phosphoenolpyruvate-binding domains"/>
    <property type="match status" value="1"/>
</dbReference>
<dbReference type="HAMAP" id="MF_00156">
    <property type="entry name" value="PanB"/>
    <property type="match status" value="1"/>
</dbReference>
<dbReference type="InterPro" id="IPR003700">
    <property type="entry name" value="Pantoate_hydroxy_MeTrfase"/>
</dbReference>
<dbReference type="InterPro" id="IPR015813">
    <property type="entry name" value="Pyrv/PenolPyrv_kinase-like_dom"/>
</dbReference>
<dbReference type="InterPro" id="IPR040442">
    <property type="entry name" value="Pyrv_kinase-like_dom_sf"/>
</dbReference>
<dbReference type="NCBIfam" id="TIGR00222">
    <property type="entry name" value="panB"/>
    <property type="match status" value="1"/>
</dbReference>
<dbReference type="NCBIfam" id="NF001452">
    <property type="entry name" value="PRK00311.1"/>
    <property type="match status" value="1"/>
</dbReference>
<dbReference type="PANTHER" id="PTHR20881">
    <property type="entry name" value="3-METHYL-2-OXOBUTANOATE HYDROXYMETHYLTRANSFERASE"/>
    <property type="match status" value="1"/>
</dbReference>
<dbReference type="PANTHER" id="PTHR20881:SF0">
    <property type="entry name" value="3-METHYL-2-OXOBUTANOATE HYDROXYMETHYLTRANSFERASE"/>
    <property type="match status" value="1"/>
</dbReference>
<dbReference type="Pfam" id="PF02548">
    <property type="entry name" value="Pantoate_transf"/>
    <property type="match status" value="1"/>
</dbReference>
<dbReference type="PIRSF" id="PIRSF000388">
    <property type="entry name" value="Pantoate_hydroxy_MeTrfase"/>
    <property type="match status" value="1"/>
</dbReference>
<dbReference type="SUPFAM" id="SSF51621">
    <property type="entry name" value="Phosphoenolpyruvate/pyruvate domain"/>
    <property type="match status" value="1"/>
</dbReference>
<reference key="1">
    <citation type="submission" date="2000-01" db="EMBL/GenBank/DDBJ databases">
        <title>Cloning, sequencing, and expression of panB gene encoding 3-methyl-2-oxobutanoate hydroxymethyltransferase from Mycobacterium sp. PYR-1.</title>
        <authorList>
            <person name="Wang R.F."/>
            <person name="Cao W.W."/>
            <person name="Cerniglia C.E."/>
        </authorList>
    </citation>
    <scope>NUCLEOTIDE SEQUENCE [GENOMIC DNA]</scope>
</reference>
<reference key="2">
    <citation type="submission" date="2006-12" db="EMBL/GenBank/DDBJ databases">
        <title>Complete sequence of Mycobacterium vanbaalenii PYR-1.</title>
        <authorList>
            <consortium name="US DOE Joint Genome Institute"/>
            <person name="Copeland A."/>
            <person name="Lucas S."/>
            <person name="Lapidus A."/>
            <person name="Barry K."/>
            <person name="Detter J.C."/>
            <person name="Glavina del Rio T."/>
            <person name="Hammon N."/>
            <person name="Israni S."/>
            <person name="Dalin E."/>
            <person name="Tice H."/>
            <person name="Pitluck S."/>
            <person name="Singan V."/>
            <person name="Schmutz J."/>
            <person name="Larimer F."/>
            <person name="Land M."/>
            <person name="Hauser L."/>
            <person name="Kyrpides N."/>
            <person name="Anderson I.J."/>
            <person name="Miller C."/>
            <person name="Richardson P."/>
        </authorList>
    </citation>
    <scope>NUCLEOTIDE SEQUENCE [LARGE SCALE GENOMIC DNA]</scope>
    <source>
        <strain>DSM 7251 / JCM 13017 / BCRC 16820 / KCTC 9966 / NRRL B-24157 / PYR-1</strain>
    </source>
</reference>
<comment type="function">
    <text evidence="1">Catalyzes the reversible reaction in which hydroxymethyl group from 5,10-methylenetetrahydrofolate is transferred onto alpha-ketoisovalerate to form ketopantoate.</text>
</comment>
<comment type="catalytic activity">
    <reaction evidence="1">
        <text>3-methyl-2-oxobutanoate + (6R)-5,10-methylene-5,6,7,8-tetrahydrofolate + H2O = 2-dehydropantoate + (6S)-5,6,7,8-tetrahydrofolate</text>
        <dbReference type="Rhea" id="RHEA:11824"/>
        <dbReference type="ChEBI" id="CHEBI:11561"/>
        <dbReference type="ChEBI" id="CHEBI:11851"/>
        <dbReference type="ChEBI" id="CHEBI:15377"/>
        <dbReference type="ChEBI" id="CHEBI:15636"/>
        <dbReference type="ChEBI" id="CHEBI:57453"/>
        <dbReference type="EC" id="2.1.2.11"/>
    </reaction>
</comment>
<comment type="cofactor">
    <cofactor evidence="1">
        <name>Mg(2+)</name>
        <dbReference type="ChEBI" id="CHEBI:18420"/>
    </cofactor>
    <text evidence="1">Binds 1 Mg(2+) ion per subunit.</text>
</comment>
<comment type="pathway">
    <text evidence="1">Cofactor biosynthesis; (R)-pantothenate biosynthesis; (R)-pantoate from 3-methyl-2-oxobutanoate: step 1/2.</text>
</comment>
<comment type="subunit">
    <text evidence="1">Homodecamer; pentamer of dimers.</text>
</comment>
<comment type="subcellular location">
    <subcellularLocation>
        <location evidence="1">Cytoplasm</location>
    </subcellularLocation>
</comment>
<comment type="similarity">
    <text evidence="1">Belongs to the PanB family.</text>
</comment>
<accession>Q9L7B2</accession>
<accession>A1TB44</accession>
<name>PANB_MYCVP</name>
<evidence type="ECO:0000255" key="1">
    <source>
        <dbReference type="HAMAP-Rule" id="MF_00156"/>
    </source>
</evidence>
<sequence>MSEQPVYGAAAEAPKPRVKVRTHHLHKWKAEGHKWAMLTAYDYSTAAVFDEAEIPVLLVGDSAANVVYGYDTTVPVTLDELIPLVRGVVRGAPHALVVADLPFGSYEAGPQQALATATRMLKETGAHAVKLEGGERVADQIAAVSAAGIPVMAHIGFTPQSVNGLGGFRVQGRGDAAEQTIHDAIAVQEAGAFAVVMEMVPAELATQITGKLTIPTVGIGAGPSCDAQVLVWQDMAGMTNGKTAKFVKRFGAVGDELRRAASDYAREVATGAFPADEHSY</sequence>
<keyword id="KW-0963">Cytoplasm</keyword>
<keyword id="KW-0460">Magnesium</keyword>
<keyword id="KW-0479">Metal-binding</keyword>
<keyword id="KW-0566">Pantothenate biosynthesis</keyword>
<keyword id="KW-0808">Transferase</keyword>
<feature type="chain" id="PRO_0000184865" description="3-methyl-2-oxobutanoate hydroxymethyltransferase">
    <location>
        <begin position="1"/>
        <end position="280"/>
    </location>
</feature>
<feature type="active site" description="Proton acceptor" evidence="1">
    <location>
        <position position="198"/>
    </location>
</feature>
<feature type="binding site" evidence="1">
    <location>
        <begin position="61"/>
        <end position="62"/>
    </location>
    <ligand>
        <name>3-methyl-2-oxobutanoate</name>
        <dbReference type="ChEBI" id="CHEBI:11851"/>
    </ligand>
</feature>
<feature type="binding site" evidence="1">
    <location>
        <position position="61"/>
    </location>
    <ligand>
        <name>Mg(2+)</name>
        <dbReference type="ChEBI" id="CHEBI:18420"/>
    </ligand>
</feature>
<feature type="binding site" evidence="1">
    <location>
        <position position="100"/>
    </location>
    <ligand>
        <name>3-methyl-2-oxobutanoate</name>
        <dbReference type="ChEBI" id="CHEBI:11851"/>
    </ligand>
</feature>
<feature type="binding site" evidence="1">
    <location>
        <position position="100"/>
    </location>
    <ligand>
        <name>Mg(2+)</name>
        <dbReference type="ChEBI" id="CHEBI:18420"/>
    </ligand>
</feature>
<feature type="binding site" evidence="1">
    <location>
        <position position="130"/>
    </location>
    <ligand>
        <name>3-methyl-2-oxobutanoate</name>
        <dbReference type="ChEBI" id="CHEBI:11851"/>
    </ligand>
</feature>
<feature type="binding site" evidence="1">
    <location>
        <position position="132"/>
    </location>
    <ligand>
        <name>Mg(2+)</name>
        <dbReference type="ChEBI" id="CHEBI:18420"/>
    </ligand>
</feature>